<organism>
    <name type="scientific">Claviceps fusiformis</name>
    <name type="common">Ergot fungus</name>
    <dbReference type="NCBI Taxonomy" id="40602"/>
    <lineage>
        <taxon>Eukaryota</taxon>
        <taxon>Fungi</taxon>
        <taxon>Dikarya</taxon>
        <taxon>Ascomycota</taxon>
        <taxon>Pezizomycotina</taxon>
        <taxon>Sordariomycetes</taxon>
        <taxon>Hypocreomycetidae</taxon>
        <taxon>Hypocreales</taxon>
        <taxon>Clavicipitaceae</taxon>
        <taxon>Claviceps</taxon>
    </lineage>
</organism>
<proteinExistence type="evidence at protein level"/>
<protein>
    <recommendedName>
        <fullName evidence="5">Catalase easC</fullName>
        <ecNumber evidence="7">1.11.-.-</ecNumber>
    </recommendedName>
    <alternativeName>
        <fullName evidence="5">Ergot alkaloid synthesis protein C</fullName>
    </alternativeName>
</protein>
<dbReference type="EC" id="1.11.-.-" evidence="7"/>
<dbReference type="EMBL" id="EU006773">
    <property type="protein sequence ID" value="ABV57821.1"/>
    <property type="molecule type" value="Genomic_DNA"/>
</dbReference>
<dbReference type="PDB" id="9JDB">
    <property type="method" value="EM"/>
    <property type="resolution" value="2.64 A"/>
    <property type="chains" value="A/B=1-479"/>
</dbReference>
<dbReference type="PDB" id="9JDC">
    <property type="method" value="EM"/>
    <property type="resolution" value="2.33 A"/>
    <property type="chains" value="A/B=1-479"/>
</dbReference>
<dbReference type="PDBsum" id="9JDB"/>
<dbReference type="PDBsum" id="9JDC"/>
<dbReference type="EMDB" id="EMD-61387"/>
<dbReference type="EMDB" id="EMD-61388"/>
<dbReference type="SMR" id="A8C7R6"/>
<dbReference type="UniPathway" id="UPA00327"/>
<dbReference type="GO" id="GO:0005739">
    <property type="term" value="C:mitochondrion"/>
    <property type="evidence" value="ECO:0007669"/>
    <property type="project" value="TreeGrafter"/>
</dbReference>
<dbReference type="GO" id="GO:0005777">
    <property type="term" value="C:peroxisome"/>
    <property type="evidence" value="ECO:0007669"/>
    <property type="project" value="TreeGrafter"/>
</dbReference>
<dbReference type="GO" id="GO:0004096">
    <property type="term" value="F:catalase activity"/>
    <property type="evidence" value="ECO:0007669"/>
    <property type="project" value="InterPro"/>
</dbReference>
<dbReference type="GO" id="GO:0020037">
    <property type="term" value="F:heme binding"/>
    <property type="evidence" value="ECO:0007669"/>
    <property type="project" value="InterPro"/>
</dbReference>
<dbReference type="GO" id="GO:0046872">
    <property type="term" value="F:metal ion binding"/>
    <property type="evidence" value="ECO:0007669"/>
    <property type="project" value="UniProtKB-KW"/>
</dbReference>
<dbReference type="GO" id="GO:0042744">
    <property type="term" value="P:hydrogen peroxide catabolic process"/>
    <property type="evidence" value="ECO:0007669"/>
    <property type="project" value="UniProtKB-KW"/>
</dbReference>
<dbReference type="GO" id="GO:0035835">
    <property type="term" value="P:indole alkaloid biosynthetic process"/>
    <property type="evidence" value="ECO:0007669"/>
    <property type="project" value="UniProtKB-UniPathway"/>
</dbReference>
<dbReference type="GO" id="GO:0042542">
    <property type="term" value="P:response to hydrogen peroxide"/>
    <property type="evidence" value="ECO:0007669"/>
    <property type="project" value="TreeGrafter"/>
</dbReference>
<dbReference type="Gene3D" id="2.40.180.10">
    <property type="entry name" value="Catalase core domain"/>
    <property type="match status" value="1"/>
</dbReference>
<dbReference type="InterPro" id="IPR018028">
    <property type="entry name" value="Catalase"/>
</dbReference>
<dbReference type="InterPro" id="IPR024708">
    <property type="entry name" value="Catalase_AS"/>
</dbReference>
<dbReference type="InterPro" id="IPR024711">
    <property type="entry name" value="Catalase_clade1/3"/>
</dbReference>
<dbReference type="InterPro" id="IPR011614">
    <property type="entry name" value="Catalase_core"/>
</dbReference>
<dbReference type="InterPro" id="IPR002226">
    <property type="entry name" value="Catalase_haem_BS"/>
</dbReference>
<dbReference type="InterPro" id="IPR020835">
    <property type="entry name" value="Catalase_sf"/>
</dbReference>
<dbReference type="PANTHER" id="PTHR11465">
    <property type="entry name" value="CATALASE"/>
    <property type="match status" value="1"/>
</dbReference>
<dbReference type="PANTHER" id="PTHR11465:SF9">
    <property type="entry name" value="CATALASE"/>
    <property type="match status" value="1"/>
</dbReference>
<dbReference type="Pfam" id="PF00199">
    <property type="entry name" value="Catalase"/>
    <property type="match status" value="1"/>
</dbReference>
<dbReference type="PIRSF" id="PIRSF038928">
    <property type="entry name" value="Catalase_clade1-3"/>
    <property type="match status" value="1"/>
</dbReference>
<dbReference type="PRINTS" id="PR00067">
    <property type="entry name" value="CATALASE"/>
</dbReference>
<dbReference type="SMART" id="SM01060">
    <property type="entry name" value="Catalase"/>
    <property type="match status" value="1"/>
</dbReference>
<dbReference type="SUPFAM" id="SSF56634">
    <property type="entry name" value="Heme-dependent catalase-like"/>
    <property type="match status" value="1"/>
</dbReference>
<dbReference type="PROSITE" id="PS00437">
    <property type="entry name" value="CATALASE_1"/>
    <property type="match status" value="1"/>
</dbReference>
<dbReference type="PROSITE" id="PS00438">
    <property type="entry name" value="CATALASE_2"/>
    <property type="match status" value="1"/>
</dbReference>
<dbReference type="PROSITE" id="PS51402">
    <property type="entry name" value="CATALASE_3"/>
    <property type="match status" value="1"/>
</dbReference>
<evidence type="ECO:0000250" key="1">
    <source>
        <dbReference type="UniProtKB" id="P15202"/>
    </source>
</evidence>
<evidence type="ECO:0000250" key="2">
    <source>
        <dbReference type="UniProtKB" id="Q6ZXC2"/>
    </source>
</evidence>
<evidence type="ECO:0000256" key="3">
    <source>
        <dbReference type="SAM" id="MobiDB-lite"/>
    </source>
</evidence>
<evidence type="ECO:0000269" key="4">
    <source>
    </source>
</evidence>
<evidence type="ECO:0000303" key="5">
    <source>
    </source>
</evidence>
<evidence type="ECO:0000305" key="6"/>
<evidence type="ECO:0000305" key="7">
    <source>
    </source>
</evidence>
<sequence length="479" mass="53982">MASQVSLTAQGSGLSAPLNGPEHLTSTTVENDPRLLDILSRFNREKIPERAVHARGAGAYGEFEVTHDVSDICDIDMLLGIGKKTPCAVRFSTTALERGSAESVRDVKGMAIKLFTGDGEWDWVCLNIPMFFIRDPSKFPDLVHAQRPDPATNLANPAAWWEFVCNNHESLHMAVFLFTDFGTMFDYRSMSGYVSHAYKWVMPDGTWKYVHWFLASDQGPNFEQGNQTREAAPNDSESATRDLYQSLERGECPSWTVKVQVIDPEDAPRLAFNILDVSKHWNLGNYPPDIPVIPERCVGKLTLKKGPENYFEEIEKLAFSPSHLVHGVEPSEDPMLQARLFAYPDAQEHRLGPQFSDMAAKRTGHAANDAPKTKKPAVPLQKQSREHAEWVSQVTSSSWSQPNETDYKFPRELWAALPRLRGEEFQNRLVVNMAESVSQIPEDLRQKVYKTLALVAEDLASRVESLTEEMVVPEQRPRL</sequence>
<feature type="chain" id="PRO_0000439126" description="Catalase easC">
    <location>
        <begin position="1"/>
        <end position="479"/>
    </location>
</feature>
<feature type="region of interest" description="Disordered" evidence="3">
    <location>
        <begin position="1"/>
        <end position="28"/>
    </location>
</feature>
<feature type="region of interest" description="Disordered" evidence="3">
    <location>
        <begin position="365"/>
        <end position="385"/>
    </location>
</feature>
<feature type="compositionally biased region" description="Polar residues" evidence="3">
    <location>
        <begin position="1"/>
        <end position="13"/>
    </location>
</feature>
<feature type="active site" evidence="1">
    <location>
        <position position="53"/>
    </location>
</feature>
<feature type="binding site" description="axial binding residue" evidence="1">
    <location>
        <position position="343"/>
    </location>
    <ligand>
        <name>heme</name>
        <dbReference type="ChEBI" id="CHEBI:30413"/>
    </ligand>
    <ligandPart>
        <name>Fe</name>
        <dbReference type="ChEBI" id="CHEBI:18248"/>
    </ligandPart>
</feature>
<name>EASC_CLAFS</name>
<gene>
    <name evidence="5" type="primary">easC</name>
</gene>
<reference key="1">
    <citation type="journal article" date="2007" name="Appl. Environ. Microbiol.">
        <title>Comparison of ergot alkaloid biosynthesis gene clusters in Claviceps species indicates loss of late pathway steps in evolution of C. fusiformis.</title>
        <authorList>
            <person name="Lorenz N."/>
            <person name="Wilson E.V."/>
            <person name="Machado C."/>
            <person name="Schardl C.L."/>
            <person name="Tudzynski P."/>
        </authorList>
    </citation>
    <scope>NUCLEOTIDE SEQUENCE [GENOMIC DNA]</scope>
    <scope>FUNCTION</scope>
    <source>
        <strain>ATCC 26245 / DSM 2942 / CBS 164.59</strain>
    </source>
</reference>
<keyword id="KW-0002">3D-structure</keyword>
<keyword id="KW-0017">Alkaloid metabolism</keyword>
<keyword id="KW-0349">Heme</keyword>
<keyword id="KW-0376">Hydrogen peroxide</keyword>
<keyword id="KW-0408">Iron</keyword>
<keyword id="KW-0479">Metal-binding</keyword>
<keyword id="KW-0560">Oxidoreductase</keyword>
<keyword id="KW-0575">Peroxidase</keyword>
<accession>A8C7R6</accession>
<comment type="function">
    <text evidence="2 4">Catalase; part of the gene cluster that mediates the biosynthesis of fungal ergot alkaloid (PubMed:17720822). DmaW catalyzes the first step of ergot alkaloid biosynthesis by condensing dimethylallyl diphosphate (DMAP) and tryptophan to form 4-dimethylallyl-L-tryptophan (By similarity). The second step is catalyzed by the methyltransferase easF that methylates 4-dimethylallyl-L-tryptophan in the presence of S-adenosyl-L-methionine, resulting in the formation of 4-dimethylallyl-L-abrine (By similarity). The catalase easC and the FAD-dependent oxidoreductase easE then transform 4-dimethylallyl-L-abrine to chanoclavine-I which is further oxidized by easD in the presence of NAD(+), resulting in the formation of chanoclavine-I aldehyde (By similarity). Agroclavine dehydrogenase easG then mediates the conversion of chanoclavine-I aldehyde to agroclavine via a non-enzymatic adduct reaction: the substrate is an iminium intermediate that is formed spontaneously from chanoclavine-I aldehyde in the presence of glutathione (By similarity). Further conversion of agroclavine to paspalic acid is a two-step process involving oxidation of agroclavine to elymoclavine and of elymoclavine to paspalic acid, the second step being performed by the elymoclavine oxidase cloA (PubMed:17720822). However, cloA does not encode a functional enzyme indicating that C.fusiformis terminates its ergot alkaloid pathway at elymoclavine (PubMed:17720822).</text>
</comment>
<comment type="cofactor">
    <cofactor evidence="1">
        <name>heme</name>
        <dbReference type="ChEBI" id="CHEBI:30413"/>
    </cofactor>
</comment>
<comment type="pathway">
    <text evidence="7">Alkaloid biosynthesis; ergot alkaloid biosynthesis.</text>
</comment>
<comment type="similarity">
    <text evidence="6">Belongs to the catalase family.</text>
</comment>